<accession>Q5HGP6</accession>
<gene>
    <name evidence="1" type="primary">ftsA</name>
    <name type="ordered locus">SACOL1198</name>
</gene>
<protein>
    <recommendedName>
        <fullName evidence="1">Cell division protein FtsA</fullName>
    </recommendedName>
</protein>
<sequence>MEEHYYVSIDIGSSSVKTIVGEKFHNGINVIGTGQTYTSGIKNGLIDDFDIARQAIKDTIKKASIASGVDIKEVFLKLPIIGTEVYDESNEIDFYEDTEINGSHIEKVLEGIREKNDVQETEVINVFPIRFIVDKENEVSDPKELIARHSLKVEAGVIAIQKSILINMIKCVEACGVDVLDVYSDAYNYGSILTATEKELGACVIDIGEDVTQVAFYERGELVDADSIEMAGRDITDDIAQGLNTSYETAEKVKHQYGHAFYDSASDQDIFTVEQVDSDETVQYTQKDLSDFIEARVEEIFFEVFDVLQDLGLTKVNGGFIVTGGSANLLGVKELLSDMVSEKVRIHTPSQMGIRKPEFSSAISTISSSIAFDELLDYVTINYHDNEETEEDVIDVKDKDNESKLGGFDWFKRKTNKKDTHENEVESTDEEIYQSEDNHQEHKQNHEHVQDKDKDKEESKFKKLMKSLFE</sequence>
<evidence type="ECO:0000255" key="1">
    <source>
        <dbReference type="HAMAP-Rule" id="MF_02033"/>
    </source>
</evidence>
<evidence type="ECO:0000256" key="2">
    <source>
        <dbReference type="SAM" id="MobiDB-lite"/>
    </source>
</evidence>
<organism>
    <name type="scientific">Staphylococcus aureus (strain COL)</name>
    <dbReference type="NCBI Taxonomy" id="93062"/>
    <lineage>
        <taxon>Bacteria</taxon>
        <taxon>Bacillati</taxon>
        <taxon>Bacillota</taxon>
        <taxon>Bacilli</taxon>
        <taxon>Bacillales</taxon>
        <taxon>Staphylococcaceae</taxon>
        <taxon>Staphylococcus</taxon>
    </lineage>
</organism>
<keyword id="KW-0131">Cell cycle</keyword>
<keyword id="KW-0132">Cell division</keyword>
<keyword id="KW-1003">Cell membrane</keyword>
<keyword id="KW-0472">Membrane</keyword>
<proteinExistence type="inferred from homology"/>
<reference key="1">
    <citation type="journal article" date="2005" name="J. Bacteriol.">
        <title>Insights on evolution of virulence and resistance from the complete genome analysis of an early methicillin-resistant Staphylococcus aureus strain and a biofilm-producing methicillin-resistant Staphylococcus epidermidis strain.</title>
        <authorList>
            <person name="Gill S.R."/>
            <person name="Fouts D.E."/>
            <person name="Archer G.L."/>
            <person name="Mongodin E.F."/>
            <person name="DeBoy R.T."/>
            <person name="Ravel J."/>
            <person name="Paulsen I.T."/>
            <person name="Kolonay J.F."/>
            <person name="Brinkac L.M."/>
            <person name="Beanan M.J."/>
            <person name="Dodson R.J."/>
            <person name="Daugherty S.C."/>
            <person name="Madupu R."/>
            <person name="Angiuoli S.V."/>
            <person name="Durkin A.S."/>
            <person name="Haft D.H."/>
            <person name="Vamathevan J.J."/>
            <person name="Khouri H."/>
            <person name="Utterback T.R."/>
            <person name="Lee C."/>
            <person name="Dimitrov G."/>
            <person name="Jiang L."/>
            <person name="Qin H."/>
            <person name="Weidman J."/>
            <person name="Tran K."/>
            <person name="Kang K.H."/>
            <person name="Hance I.R."/>
            <person name="Nelson K.E."/>
            <person name="Fraser C.M."/>
        </authorList>
    </citation>
    <scope>NUCLEOTIDE SEQUENCE [LARGE SCALE GENOMIC DNA]</scope>
    <source>
        <strain>COL</strain>
    </source>
</reference>
<feature type="chain" id="PRO_0000062746" description="Cell division protein FtsA">
    <location>
        <begin position="1"/>
        <end position="470"/>
    </location>
</feature>
<feature type="region of interest" description="Disordered" evidence="2">
    <location>
        <begin position="416"/>
        <end position="470"/>
    </location>
</feature>
<feature type="compositionally biased region" description="Acidic residues" evidence="2">
    <location>
        <begin position="425"/>
        <end position="434"/>
    </location>
</feature>
<feature type="compositionally biased region" description="Basic and acidic residues" evidence="2">
    <location>
        <begin position="436"/>
        <end position="461"/>
    </location>
</feature>
<comment type="function">
    <text evidence="1">Cell division protein that is involved in the assembly of the Z ring. May serve as a membrane anchor for the Z ring.</text>
</comment>
<comment type="subunit">
    <text evidence="1">Self-interacts. Interacts with FtsZ.</text>
</comment>
<comment type="subcellular location">
    <subcellularLocation>
        <location evidence="1">Cell membrane</location>
        <topology evidence="1">Peripheral membrane protein</topology>
        <orientation evidence="1">Cytoplasmic side</orientation>
    </subcellularLocation>
    <text evidence="1">Localizes to the Z ring in an FtsZ-dependent manner. Targeted to the membrane through a conserved C-terminal amphipathic helix.</text>
</comment>
<comment type="similarity">
    <text evidence="1">Belongs to the FtsA/MreB family.</text>
</comment>
<dbReference type="EMBL" id="CP000046">
    <property type="protein sequence ID" value="AAW38035.1"/>
    <property type="molecule type" value="Genomic_DNA"/>
</dbReference>
<dbReference type="RefSeq" id="WP_000391031.1">
    <property type="nucleotide sequence ID" value="NZ_JBGOFO010000002.1"/>
</dbReference>
<dbReference type="SMR" id="Q5HGP6"/>
<dbReference type="KEGG" id="sac:SACOL1198"/>
<dbReference type="HOGENOM" id="CLU_037850_1_0_9"/>
<dbReference type="Proteomes" id="UP000000530">
    <property type="component" value="Chromosome"/>
</dbReference>
<dbReference type="GO" id="GO:0032153">
    <property type="term" value="C:cell division site"/>
    <property type="evidence" value="ECO:0007669"/>
    <property type="project" value="UniProtKB-UniRule"/>
</dbReference>
<dbReference type="GO" id="GO:0009898">
    <property type="term" value="C:cytoplasmic side of plasma membrane"/>
    <property type="evidence" value="ECO:0007669"/>
    <property type="project" value="UniProtKB-UniRule"/>
</dbReference>
<dbReference type="GO" id="GO:0043093">
    <property type="term" value="P:FtsZ-dependent cytokinesis"/>
    <property type="evidence" value="ECO:0007669"/>
    <property type="project" value="UniProtKB-UniRule"/>
</dbReference>
<dbReference type="CDD" id="cd24048">
    <property type="entry name" value="ASKHA_NBD_FtsA"/>
    <property type="match status" value="1"/>
</dbReference>
<dbReference type="FunFam" id="3.30.420.40:FF:000196">
    <property type="entry name" value="Cell division protein FtsA"/>
    <property type="match status" value="1"/>
</dbReference>
<dbReference type="Gene3D" id="3.30.1490.110">
    <property type="match status" value="1"/>
</dbReference>
<dbReference type="Gene3D" id="3.30.420.40">
    <property type="match status" value="2"/>
</dbReference>
<dbReference type="HAMAP" id="MF_02033">
    <property type="entry name" value="FtsA"/>
    <property type="match status" value="1"/>
</dbReference>
<dbReference type="InterPro" id="IPR043129">
    <property type="entry name" value="ATPase_NBD"/>
</dbReference>
<dbReference type="InterPro" id="IPR020823">
    <property type="entry name" value="Cell_div_FtsA"/>
</dbReference>
<dbReference type="InterPro" id="IPR050696">
    <property type="entry name" value="FtsA/MreB"/>
</dbReference>
<dbReference type="InterPro" id="IPR003494">
    <property type="entry name" value="SHS2_FtsA"/>
</dbReference>
<dbReference type="NCBIfam" id="TIGR01174">
    <property type="entry name" value="ftsA"/>
    <property type="match status" value="1"/>
</dbReference>
<dbReference type="PANTHER" id="PTHR32432:SF4">
    <property type="entry name" value="CELL DIVISION PROTEIN FTSA"/>
    <property type="match status" value="1"/>
</dbReference>
<dbReference type="PANTHER" id="PTHR32432">
    <property type="entry name" value="CELL DIVISION PROTEIN FTSA-RELATED"/>
    <property type="match status" value="1"/>
</dbReference>
<dbReference type="Pfam" id="PF14450">
    <property type="entry name" value="FtsA"/>
    <property type="match status" value="1"/>
</dbReference>
<dbReference type="Pfam" id="PF02491">
    <property type="entry name" value="SHS2_FTSA"/>
    <property type="match status" value="1"/>
</dbReference>
<dbReference type="PIRSF" id="PIRSF003101">
    <property type="entry name" value="FtsA"/>
    <property type="match status" value="1"/>
</dbReference>
<dbReference type="SMART" id="SM00842">
    <property type="entry name" value="FtsA"/>
    <property type="match status" value="1"/>
</dbReference>
<dbReference type="SUPFAM" id="SSF53067">
    <property type="entry name" value="Actin-like ATPase domain"/>
    <property type="match status" value="2"/>
</dbReference>
<name>FTSA_STAAC</name>